<accession>P97353</accession>
<accession>Q91V73</accession>
<accession>Q920T3</accession>
<accession>Q920T4</accession>
<gene>
    <name evidence="5" type="primary">Sec1</name>
    <name evidence="5" type="synonym">Fut3</name>
</gene>
<protein>
    <recommendedName>
        <fullName>Galactoside 2-alpha-L-fucosyltransferase Sec1</fullName>
        <ecNumber>2.4.1.-</ecNumber>
    </recommendedName>
    <alternativeName>
        <fullName>Alpha(1,2)FT 3</fullName>
    </alternativeName>
    <alternativeName>
        <fullName>GDP-L-fucose:beta-D-galactoside 2-alpha-L-fucosyltransferase 3</fullName>
    </alternativeName>
    <alternativeName>
        <fullName evidence="5">Secretory blood group protein 1</fullName>
    </alternativeName>
</protein>
<feature type="chain" id="PRO_0000149115" description="Galactoside 2-alpha-L-fucosyltransferase Sec1">
    <location>
        <begin position="1"/>
        <end position="368"/>
    </location>
</feature>
<feature type="topological domain" description="Cytoplasmic" evidence="3">
    <location>
        <begin position="1"/>
        <end position="20"/>
    </location>
</feature>
<feature type="transmembrane region" description="Helical; Signal-anchor for type II membrane protein" evidence="3">
    <location>
        <begin position="21"/>
        <end position="41"/>
    </location>
</feature>
<feature type="topological domain" description="Lumenal" evidence="3">
    <location>
        <begin position="42"/>
        <end position="368"/>
    </location>
</feature>
<feature type="glycosylation site" description="N-linked (GlcNAc...) asparagine" evidence="3">
    <location>
        <position position="195"/>
    </location>
</feature>
<feature type="glycosylation site" description="N-linked (GlcNAc...) asparagine" evidence="3">
    <location>
        <position position="289"/>
    </location>
</feature>
<feature type="glycosylation site" description="N-linked (GlcNAc...) asparagine" evidence="3">
    <location>
        <position position="315"/>
    </location>
</feature>
<feature type="sequence variant" description="In strain: BFM/2Msf, C57BL/10SnJ and pgn2.">
    <original>G</original>
    <variation>S</variation>
    <location>
        <position position="46"/>
    </location>
</feature>
<feature type="sequence variant" description="In strain: BFM/2Msf, C57BL/10SnJ and pgn2.">
    <original>A</original>
    <variation>G</variation>
    <location>
        <position position="50"/>
    </location>
</feature>
<feature type="sequence variant" description="In strain: CAST/Ei.">
    <original>P</original>
    <variation>A</variation>
    <location>
        <position position="62"/>
    </location>
</feature>
<feature type="sequence variant" description="In strain: BFM/2Msf and C57BL/10SnJ.">
    <original>H</original>
    <variation>Q</variation>
    <location>
        <position position="150"/>
    </location>
</feature>
<feature type="sequence variant" description="In strain: pgn2.">
    <original>R</original>
    <variation>H</variation>
    <location>
        <position position="214"/>
    </location>
</feature>
<proteinExistence type="evidence at transcript level"/>
<name>SEC1_MOUSE</name>
<evidence type="ECO:0000250" key="1">
    <source>
        <dbReference type="UniProtKB" id="O09160"/>
    </source>
</evidence>
<evidence type="ECO:0000250" key="2">
    <source>
        <dbReference type="UniProtKB" id="Q9TTY3"/>
    </source>
</evidence>
<evidence type="ECO:0000255" key="3"/>
<evidence type="ECO:0000305" key="4"/>
<evidence type="ECO:0000312" key="5">
    <source>
        <dbReference type="MGI" id="MGI:1928893"/>
    </source>
</evidence>
<keyword id="KW-0325">Glycoprotein</keyword>
<keyword id="KW-0328">Glycosyltransferase</keyword>
<keyword id="KW-0333">Golgi apparatus</keyword>
<keyword id="KW-0443">Lipid metabolism</keyword>
<keyword id="KW-0472">Membrane</keyword>
<keyword id="KW-1185">Reference proteome</keyword>
<keyword id="KW-0735">Signal-anchor</keyword>
<keyword id="KW-0808">Transferase</keyword>
<keyword id="KW-0812">Transmembrane</keyword>
<keyword id="KW-1133">Transmembrane helix</keyword>
<organism>
    <name type="scientific">Mus musculus</name>
    <name type="common">Mouse</name>
    <dbReference type="NCBI Taxonomy" id="10090"/>
    <lineage>
        <taxon>Eukaryota</taxon>
        <taxon>Metazoa</taxon>
        <taxon>Chordata</taxon>
        <taxon>Craniata</taxon>
        <taxon>Vertebrata</taxon>
        <taxon>Euteleostomi</taxon>
        <taxon>Mammalia</taxon>
        <taxon>Eutheria</taxon>
        <taxon>Euarchontoglires</taxon>
        <taxon>Glires</taxon>
        <taxon>Rodentia</taxon>
        <taxon>Myomorpha</taxon>
        <taxon>Muroidea</taxon>
        <taxon>Muridae</taxon>
        <taxon>Murinae</taxon>
        <taxon>Mus</taxon>
        <taxon>Mus</taxon>
    </lineage>
</organism>
<dbReference type="EC" id="2.4.1.-"/>
<dbReference type="EMBL" id="Y09882">
    <property type="protein sequence ID" value="CAA71008.1"/>
    <property type="molecule type" value="Genomic_DNA"/>
</dbReference>
<dbReference type="EMBL" id="AF113532">
    <property type="protein sequence ID" value="AAD25351.1"/>
    <property type="molecule type" value="mRNA"/>
</dbReference>
<dbReference type="EMBL" id="AF214657">
    <property type="protein sequence ID" value="AAF45147.1"/>
    <property type="molecule type" value="Genomic_DNA"/>
</dbReference>
<dbReference type="EMBL" id="AF214658">
    <property type="protein sequence ID" value="AAF45148.1"/>
    <property type="molecule type" value="Genomic_DNA"/>
</dbReference>
<dbReference type="EMBL" id="AB039204">
    <property type="protein sequence ID" value="BAB68728.1"/>
    <property type="molecule type" value="Genomic_DNA"/>
</dbReference>
<dbReference type="EMBL" id="AB039205">
    <property type="protein sequence ID" value="BAB68729.1"/>
    <property type="molecule type" value="Genomic_DNA"/>
</dbReference>
<dbReference type="EMBL" id="AB039206">
    <property type="protein sequence ID" value="BAB68730.1"/>
    <property type="molecule type" value="Genomic_DNA"/>
</dbReference>
<dbReference type="EMBL" id="AB039207">
    <property type="protein sequence ID" value="BAB68731.1"/>
    <property type="molecule type" value="Genomic_DNA"/>
</dbReference>
<dbReference type="EMBL" id="AB039208">
    <property type="protein sequence ID" value="BAB68732.1"/>
    <property type="molecule type" value="Genomic_DNA"/>
</dbReference>
<dbReference type="EMBL" id="AB039209">
    <property type="protein sequence ID" value="BAB68733.1"/>
    <property type="molecule type" value="Genomic_DNA"/>
</dbReference>
<dbReference type="EMBL" id="AB039210">
    <property type="protein sequence ID" value="BAB68734.1"/>
    <property type="molecule type" value="Genomic_DNA"/>
</dbReference>
<dbReference type="EMBL" id="AB039211">
    <property type="protein sequence ID" value="BAB68735.1"/>
    <property type="molecule type" value="Genomic_DNA"/>
</dbReference>
<dbReference type="EMBL" id="AB039212">
    <property type="protein sequence ID" value="BAB68736.1"/>
    <property type="molecule type" value="Genomic_DNA"/>
</dbReference>
<dbReference type="STRING" id="10090.ENSMUSP00000045229"/>
<dbReference type="CAZy" id="GT11">
    <property type="family name" value="Glycosyltransferase Family 11"/>
</dbReference>
<dbReference type="GlyCosmos" id="P97353">
    <property type="glycosylation" value="3 sites, No reported glycans"/>
</dbReference>
<dbReference type="GlyGen" id="P97353">
    <property type="glycosylation" value="3 sites"/>
</dbReference>
<dbReference type="PaxDb" id="10090-ENSMUSP00000045229"/>
<dbReference type="ProteomicsDB" id="261145"/>
<dbReference type="DNASU" id="56546"/>
<dbReference type="AGR" id="MGI:1928893"/>
<dbReference type="MGI" id="MGI:1928893">
    <property type="gene designation" value="Sec1"/>
</dbReference>
<dbReference type="eggNOG" id="ENOG502S316">
    <property type="taxonomic scope" value="Eukaryota"/>
</dbReference>
<dbReference type="InParanoid" id="P97353"/>
<dbReference type="OrthoDB" id="3226at2759"/>
<dbReference type="BRENDA" id="2.4.1.69">
    <property type="organism ID" value="3474"/>
</dbReference>
<dbReference type="UniPathway" id="UPA00378"/>
<dbReference type="ChiTaRS" id="Sec1">
    <property type="organism name" value="mouse"/>
</dbReference>
<dbReference type="PRO" id="PR:P97353"/>
<dbReference type="Proteomes" id="UP000000589">
    <property type="component" value="Unplaced"/>
</dbReference>
<dbReference type="RNAct" id="P97353">
    <property type="molecule type" value="protein"/>
</dbReference>
<dbReference type="GO" id="GO:0032580">
    <property type="term" value="C:Golgi cisterna membrane"/>
    <property type="evidence" value="ECO:0007669"/>
    <property type="project" value="UniProtKB-SubCell"/>
</dbReference>
<dbReference type="GO" id="GO:0008417">
    <property type="term" value="F:fucosyltransferase activity"/>
    <property type="evidence" value="ECO:0000314"/>
    <property type="project" value="MGI"/>
</dbReference>
<dbReference type="GO" id="GO:0008107">
    <property type="term" value="F:galactoside 2-alpha-L-fucosyltransferase activity"/>
    <property type="evidence" value="ECO:0000314"/>
    <property type="project" value="UniProtKB"/>
</dbReference>
<dbReference type="GO" id="GO:0006629">
    <property type="term" value="P:lipid metabolic process"/>
    <property type="evidence" value="ECO:0007669"/>
    <property type="project" value="UniProtKB-KW"/>
</dbReference>
<dbReference type="GO" id="GO:0021772">
    <property type="term" value="P:olfactory bulb development"/>
    <property type="evidence" value="ECO:0000250"/>
    <property type="project" value="UniProtKB"/>
</dbReference>
<dbReference type="GO" id="GO:0009312">
    <property type="term" value="P:oligosaccharide biosynthetic process"/>
    <property type="evidence" value="ECO:0000314"/>
    <property type="project" value="MGI"/>
</dbReference>
<dbReference type="GO" id="GO:0001954">
    <property type="term" value="P:positive regulation of cell-matrix adhesion"/>
    <property type="evidence" value="ECO:0000250"/>
    <property type="project" value="UniProtKB"/>
</dbReference>
<dbReference type="GO" id="GO:0010595">
    <property type="term" value="P:positive regulation of endothelial cell migration"/>
    <property type="evidence" value="ECO:0000250"/>
    <property type="project" value="UniProtKB"/>
</dbReference>
<dbReference type="GO" id="GO:1904906">
    <property type="term" value="P:positive regulation of endothelial cell-matrix adhesion via fibronectin"/>
    <property type="evidence" value="ECO:0000250"/>
    <property type="project" value="UniProtKB"/>
</dbReference>
<dbReference type="GO" id="GO:1903672">
    <property type="term" value="P:positive regulation of sprouting angiogenesis"/>
    <property type="evidence" value="ECO:0000250"/>
    <property type="project" value="UniProtKB"/>
</dbReference>
<dbReference type="GO" id="GO:0006486">
    <property type="term" value="P:protein glycosylation"/>
    <property type="evidence" value="ECO:0000314"/>
    <property type="project" value="UniProtKB"/>
</dbReference>
<dbReference type="CDD" id="cd11301">
    <property type="entry name" value="Fut1_Fut2_like"/>
    <property type="match status" value="1"/>
</dbReference>
<dbReference type="InterPro" id="IPR002516">
    <property type="entry name" value="Glyco_trans_11"/>
</dbReference>
<dbReference type="PANTHER" id="PTHR11927:SF5">
    <property type="entry name" value="GALACTOSIDE 2-ALPHA-L-FUCOSYLTRANSFERASE SEC1"/>
    <property type="match status" value="1"/>
</dbReference>
<dbReference type="PANTHER" id="PTHR11927">
    <property type="entry name" value="GALACTOSIDE 2-L-FUCOSYLTRANSFERASE"/>
    <property type="match status" value="1"/>
</dbReference>
<dbReference type="Pfam" id="PF01531">
    <property type="entry name" value="Glyco_transf_11"/>
    <property type="match status" value="1"/>
</dbReference>
<sequence length="368" mass="41464">MPSDSCLLSLTVLQRLRAICPPLSTFYLFFVIFVVSTIFHCHRRLGLVPAPWASPSLVVFPPRHMPREGMFTIRVKGRLGNQMGEYATLFALARMNGRLAFIPASMHSTLAPIFRISLPVLHSDTAKRIPWQNYHLNDWMEERYRHIPGHYVRFTGYPCSWTFYHHLRPEILKEFTLHDHVREEAQAFLRGLQVNGSQPSTFVGVHVRRGDYVRVMPKVWKGVVADRGYLEKALDRFRARYSSPVFVVTSDDMAWCRKSITASRGDVAFAGNGLQGSPAKDIALLMQCNHTVITLGTFGIWAAYLTGGDTVYLANFTQPNSPFHTVFKPEAAYLPEWVGIAADLGQPNTVGSGHASARAPKRHWGALL</sequence>
<comment type="function">
    <text evidence="2">Catalyzes the transfer of alpha 1,2-linked fucose to ganglioside GM1 and galacto-N-biose (By similarity).</text>
</comment>
<comment type="catalytic activity">
    <reaction evidence="2">
        <text>a ganglioside GM1 + GDP-beta-L-fucose = a ganglioside Fuc-GM1 + GDP + H(+)</text>
        <dbReference type="Rhea" id="RHEA:48292"/>
        <dbReference type="ChEBI" id="CHEBI:15378"/>
        <dbReference type="ChEBI" id="CHEBI:57273"/>
        <dbReference type="ChEBI" id="CHEBI:58189"/>
        <dbReference type="ChEBI" id="CHEBI:82639"/>
        <dbReference type="ChEBI" id="CHEBI:90189"/>
    </reaction>
    <physiologicalReaction direction="left-to-right" evidence="2">
        <dbReference type="Rhea" id="RHEA:48293"/>
    </physiologicalReaction>
</comment>
<comment type="pathway">
    <text>Protein modification; protein glycosylation.</text>
</comment>
<comment type="subcellular location">
    <subcellularLocation>
        <location evidence="1">Golgi apparatus</location>
        <location evidence="1">Golgi stack membrane</location>
        <topology evidence="1">Single-pass type II membrane protein</topology>
    </subcellularLocation>
    <text evidence="1">Membrane-bound form in trans cisternae of Golgi.</text>
</comment>
<comment type="miscellaneous">
    <text>In mouse, there are three genes (Fut1, Fut2 and Sec1) which encode galactoside 2-L-fucosyltransferase.</text>
</comment>
<comment type="similarity">
    <text evidence="4">Belongs to the glycosyltransferase 11 family.</text>
</comment>
<comment type="caution">
    <text evidence="4">Was originally thought to be Fut2.</text>
</comment>
<comment type="online information" name="Functional Glycomics Gateway - GTase">
    <link uri="http://www.functionalglycomics.org/glycomics/molecule/jsp/glycoEnzyme/viewGlycoEnzyme.jsp?gbpId=gt_mou_621"/>
    <text>Secretory blood group protein 1</text>
</comment>
<reference key="1">
    <citation type="submission" date="1996-12" db="EMBL/GenBank/DDBJ databases">
        <title>Molecular cloning and expression of a mouse GDP-L-Fucose: beta-D-galactoside 2-alpha-L-Fucosyltransferase.</title>
        <authorList>
            <person name="Hitoshi S."/>
            <person name="Kusunoki S."/>
            <person name="Kanazawa I."/>
            <person name="Tsuji S."/>
        </authorList>
    </citation>
    <scope>NUCLEOTIDE SEQUENCE</scope>
    <source>
        <strain>ICR</strain>
    </source>
</reference>
<reference key="2">
    <citation type="journal article" date="2000" name="Biochim. Biophys. Acta">
        <title>GDP-fucose: beta-galactoside alpha1,2-fucosyltransferase, MFUT-II, and not MFUT-I or -III, is induced in a restricted region of the digestive tract of germ-free mice by host-microbe interactions and cycloheximide.</title>
        <authorList>
            <person name="Lin B."/>
            <person name="Hayashi Y."/>
            <person name="Saito M."/>
            <person name="Sakakibara Y."/>
            <person name="Yanagisawa M."/>
            <person name="Iwamori M."/>
        </authorList>
    </citation>
    <scope>NUCLEOTIDE SEQUENCE</scope>
    <source>
        <strain>ICR</strain>
        <tissue>Gastrointestinal tract</tissue>
    </source>
</reference>
<reference key="3">
    <citation type="journal article" date="2001" name="J. Biol. Chem.">
        <title>Molecular cloning, genomic mapping, and expression of two secretor blood group alpha (1,2)fucosyltransferase genes differentially regulated in mouse uterine epithelium and gastrointestinal tract.</title>
        <authorList>
            <person name="Domino S.E."/>
            <person name="Zhang L."/>
            <person name="Lowe J.B."/>
        </authorList>
    </citation>
    <scope>NUCLEOTIDE SEQUENCE [GENOMIC DNA]</scope>
    <source>
        <strain>129/Ola</strain>
    </source>
</reference>
<reference key="4">
    <citation type="submission" date="2000-02" db="EMBL/GenBank/DDBJ databases">
        <title>Conspicuous differences among gene genealogies of 21 nuclear genes of five Mus musculus subspecies.</title>
        <authorList>
            <person name="Liu Y."/>
            <person name="Kitano T."/>
            <person name="Koide T."/>
            <person name="Shiroishi T."/>
            <person name="Moriwaki K."/>
            <person name="Saitou N."/>
        </authorList>
    </citation>
    <scope>NUCLEOTIDE SEQUENCE</scope>
    <source>
        <strain>BFM/2Msf</strain>
        <strain>BLG2/Msf</strain>
        <strain>C57BL/10SnJ</strain>
        <strain>CAST/EiJ</strain>
        <strain>HMI/Msf</strain>
        <strain>MSM/Msf</strain>
        <strain>NJL/Msf</strain>
        <strain>pgn2</strain>
        <strain>SWN/Msf</strain>
    </source>
</reference>